<protein>
    <recommendedName>
        <fullName>C-X-C chemokine receptor type 5</fullName>
        <shortName>CXC-R5</shortName>
        <shortName>CXCR-5</shortName>
    </recommendedName>
    <alternativeName>
        <fullName>Burkitt lymphoma receptor 1</fullName>
    </alternativeName>
    <alternativeName>
        <fullName>Monocyte-derived receptor 15</fullName>
        <shortName>MDR-15</shortName>
    </alternativeName>
    <cdAntigenName>CD185</cdAntigenName>
</protein>
<evidence type="ECO:0000255" key="1"/>
<evidence type="ECO:0000255" key="2">
    <source>
        <dbReference type="PROSITE-ProRule" id="PRU00521"/>
    </source>
</evidence>
<evidence type="ECO:0000269" key="3">
    <source>
    </source>
</evidence>
<evidence type="ECO:0000303" key="4">
    <source>
    </source>
</evidence>
<keyword id="KW-0025">Alternative splicing</keyword>
<keyword id="KW-0075">B-cell activation</keyword>
<keyword id="KW-1003">Cell membrane</keyword>
<keyword id="KW-1015">Disulfide bond</keyword>
<keyword id="KW-0297">G-protein coupled receptor</keyword>
<keyword id="KW-0325">Glycoprotein</keyword>
<keyword id="KW-0472">Membrane</keyword>
<keyword id="KW-1267">Proteomics identification</keyword>
<keyword id="KW-0675">Receptor</keyword>
<keyword id="KW-1185">Reference proteome</keyword>
<keyword id="KW-0807">Transducer</keyword>
<keyword id="KW-0812">Transmembrane</keyword>
<keyword id="KW-1133">Transmembrane helix</keyword>
<sequence>MNYPLTLEMDLENLEDLFWELDRLDNYNDTSLVENHLCPATEGPLMASFKAVFVPVAYSLIFLLGVIGNVLVLVILERHRQTRSSTETFLFHLAVADLLLVFILPFAVAEGSVGWVLGTFLCKTVIALHKVNFYCSSLLLACIAVDRYLAIVHAVHAYRHRRLLSIHITCGTIWLVGFLLALPEILFAKVSQGHHNNSLPRCTFSQENQAETHAWFTSRFLYHVAGFLLPMLVMGWCYVGVVHRLRQAQRRPQRQKAVRVAILVTSIFFLCWSPYHIVIFLDTLARLKAVDNTCKLNGSLPVAITMCEFLGLAHCCLNPMLYTFAGVKFRSDLSRLLTKLGCTGPASLCQLFPSWRRSSLSESENATSLTTF</sequence>
<organism>
    <name type="scientific">Homo sapiens</name>
    <name type="common">Human</name>
    <dbReference type="NCBI Taxonomy" id="9606"/>
    <lineage>
        <taxon>Eukaryota</taxon>
        <taxon>Metazoa</taxon>
        <taxon>Chordata</taxon>
        <taxon>Craniata</taxon>
        <taxon>Vertebrata</taxon>
        <taxon>Euteleostomi</taxon>
        <taxon>Mammalia</taxon>
        <taxon>Eutheria</taxon>
        <taxon>Euarchontoglires</taxon>
        <taxon>Primates</taxon>
        <taxon>Haplorrhini</taxon>
        <taxon>Catarrhini</taxon>
        <taxon>Hominidae</taxon>
        <taxon>Homo</taxon>
    </lineage>
</organism>
<dbReference type="EMBL" id="X68149">
    <property type="protein sequence ID" value="CAA48252.1"/>
    <property type="molecule type" value="mRNA"/>
</dbReference>
<dbReference type="EMBL" id="X68829">
    <property type="protein sequence ID" value="CAA48723.1"/>
    <property type="molecule type" value="mRNA"/>
</dbReference>
<dbReference type="CCDS" id="CCDS8402.1">
    <molecule id="P32302-1"/>
</dbReference>
<dbReference type="PIR" id="S26667">
    <property type="entry name" value="S26667"/>
</dbReference>
<dbReference type="RefSeq" id="NP_001707.1">
    <molecule id="P32302-1"/>
    <property type="nucleotide sequence ID" value="NM_001716.5"/>
</dbReference>
<dbReference type="RefSeq" id="NP_116743.1">
    <molecule id="P32302-2"/>
    <property type="nucleotide sequence ID" value="NM_032966.2"/>
</dbReference>
<dbReference type="RefSeq" id="XP_054225616.1">
    <molecule id="P32302-1"/>
    <property type="nucleotide sequence ID" value="XM_054369641.1"/>
</dbReference>
<dbReference type="SMR" id="P32302"/>
<dbReference type="BioGRID" id="107112">
    <property type="interactions" value="6"/>
</dbReference>
<dbReference type="CORUM" id="P32302"/>
<dbReference type="DIP" id="DIP-5834N"/>
<dbReference type="FunCoup" id="P32302">
    <property type="interactions" value="961"/>
</dbReference>
<dbReference type="IntAct" id="P32302">
    <property type="interactions" value="8"/>
</dbReference>
<dbReference type="MINT" id="P32302"/>
<dbReference type="STRING" id="9606.ENSP00000292174"/>
<dbReference type="BindingDB" id="P32302"/>
<dbReference type="ChEMBL" id="CHEMBL1075315"/>
<dbReference type="GuidetoPHARMACOLOGY" id="72"/>
<dbReference type="GlyCosmos" id="P32302">
    <property type="glycosylation" value="2 sites, No reported glycans"/>
</dbReference>
<dbReference type="GlyGen" id="P32302">
    <property type="glycosylation" value="3 sites"/>
</dbReference>
<dbReference type="iPTMnet" id="P32302"/>
<dbReference type="PhosphoSitePlus" id="P32302"/>
<dbReference type="BioMuta" id="CXCR5"/>
<dbReference type="DMDM" id="416718"/>
<dbReference type="MassIVE" id="P32302"/>
<dbReference type="PaxDb" id="9606-ENSP00000292174"/>
<dbReference type="PeptideAtlas" id="P32302"/>
<dbReference type="ProteomicsDB" id="54865">
    <molecule id="P32302-1"/>
</dbReference>
<dbReference type="ProteomicsDB" id="54866">
    <molecule id="P32302-2"/>
</dbReference>
<dbReference type="Antibodypedia" id="18705">
    <property type="antibodies" value="773 antibodies from 41 providers"/>
</dbReference>
<dbReference type="DNASU" id="643"/>
<dbReference type="Ensembl" id="ENST00000292174.5">
    <molecule id="P32302-1"/>
    <property type="protein sequence ID" value="ENSP00000292174.4"/>
    <property type="gene ID" value="ENSG00000160683.5"/>
</dbReference>
<dbReference type="GeneID" id="643"/>
<dbReference type="KEGG" id="hsa:643"/>
<dbReference type="MANE-Select" id="ENST00000292174.5">
    <property type="protein sequence ID" value="ENSP00000292174.4"/>
    <property type="RefSeq nucleotide sequence ID" value="NM_001716.5"/>
    <property type="RefSeq protein sequence ID" value="NP_001707.1"/>
</dbReference>
<dbReference type="UCSC" id="uc001pue.5">
    <molecule id="P32302-1"/>
    <property type="organism name" value="human"/>
</dbReference>
<dbReference type="AGR" id="HGNC:1060"/>
<dbReference type="CTD" id="643"/>
<dbReference type="DisGeNET" id="643"/>
<dbReference type="GeneCards" id="CXCR5"/>
<dbReference type="HGNC" id="HGNC:1060">
    <property type="gene designation" value="CXCR5"/>
</dbReference>
<dbReference type="HPA" id="ENSG00000160683">
    <property type="expression patterns" value="Tissue enhanced (bone marrow, intestine, lymphoid tissue)"/>
</dbReference>
<dbReference type="MIM" id="601613">
    <property type="type" value="gene"/>
</dbReference>
<dbReference type="neXtProt" id="NX_P32302"/>
<dbReference type="OpenTargets" id="ENSG00000160683"/>
<dbReference type="PharmGKB" id="PA162383046"/>
<dbReference type="VEuPathDB" id="HostDB:ENSG00000160683"/>
<dbReference type="eggNOG" id="KOG3656">
    <property type="taxonomic scope" value="Eukaryota"/>
</dbReference>
<dbReference type="GeneTree" id="ENSGT01050000244848"/>
<dbReference type="HOGENOM" id="CLU_009579_8_3_1"/>
<dbReference type="InParanoid" id="P32302"/>
<dbReference type="OMA" id="FTKNCLL"/>
<dbReference type="OrthoDB" id="9818824at2759"/>
<dbReference type="PAN-GO" id="P32302">
    <property type="GO annotations" value="7 GO annotations based on evolutionary models"/>
</dbReference>
<dbReference type="PhylomeDB" id="P32302"/>
<dbReference type="TreeFam" id="TF330966"/>
<dbReference type="PathwayCommons" id="P32302"/>
<dbReference type="Reactome" id="R-HSA-380108">
    <property type="pathway name" value="Chemokine receptors bind chemokines"/>
</dbReference>
<dbReference type="Reactome" id="R-HSA-418594">
    <property type="pathway name" value="G alpha (i) signalling events"/>
</dbReference>
<dbReference type="SignaLink" id="P32302"/>
<dbReference type="BioGRID-ORCS" id="643">
    <property type="hits" value="14 hits in 1145 CRISPR screens"/>
</dbReference>
<dbReference type="ChiTaRS" id="CXCR5">
    <property type="organism name" value="human"/>
</dbReference>
<dbReference type="GeneWiki" id="CXCR5"/>
<dbReference type="GenomeRNAi" id="643"/>
<dbReference type="Pharos" id="P32302">
    <property type="development level" value="Tchem"/>
</dbReference>
<dbReference type="PRO" id="PR:P32302"/>
<dbReference type="Proteomes" id="UP000005640">
    <property type="component" value="Chromosome 11"/>
</dbReference>
<dbReference type="RNAct" id="P32302">
    <property type="molecule type" value="protein"/>
</dbReference>
<dbReference type="Bgee" id="ENSG00000160683">
    <property type="expression patterns" value="Expressed in granulocyte and 100 other cell types or tissues"/>
</dbReference>
<dbReference type="ExpressionAtlas" id="P32302">
    <property type="expression patterns" value="baseline and differential"/>
</dbReference>
<dbReference type="GO" id="GO:0009897">
    <property type="term" value="C:external side of plasma membrane"/>
    <property type="evidence" value="ECO:0000318"/>
    <property type="project" value="GO_Central"/>
</dbReference>
<dbReference type="GO" id="GO:0005886">
    <property type="term" value="C:plasma membrane"/>
    <property type="evidence" value="ECO:0000304"/>
    <property type="project" value="Reactome"/>
</dbReference>
<dbReference type="GO" id="GO:0019957">
    <property type="term" value="F:C-C chemokine binding"/>
    <property type="evidence" value="ECO:0000318"/>
    <property type="project" value="GO_Central"/>
</dbReference>
<dbReference type="GO" id="GO:0016493">
    <property type="term" value="F:C-C chemokine receptor activity"/>
    <property type="evidence" value="ECO:0000318"/>
    <property type="project" value="GO_Central"/>
</dbReference>
<dbReference type="GO" id="GO:0016494">
    <property type="term" value="F:C-X-C chemokine receptor activity"/>
    <property type="evidence" value="ECO:0007669"/>
    <property type="project" value="InterPro"/>
</dbReference>
<dbReference type="GO" id="GO:0004930">
    <property type="term" value="F:G protein-coupled receptor activity"/>
    <property type="evidence" value="ECO:0000304"/>
    <property type="project" value="ProtInc"/>
</dbReference>
<dbReference type="GO" id="GO:0042113">
    <property type="term" value="P:B cell activation"/>
    <property type="evidence" value="ECO:0007669"/>
    <property type="project" value="UniProtKB-KW"/>
</dbReference>
<dbReference type="GO" id="GO:0019722">
    <property type="term" value="P:calcium-mediated signaling"/>
    <property type="evidence" value="ECO:0000318"/>
    <property type="project" value="GO_Central"/>
</dbReference>
<dbReference type="GO" id="GO:0060326">
    <property type="term" value="P:cell chemotaxis"/>
    <property type="evidence" value="ECO:0000318"/>
    <property type="project" value="GO_Central"/>
</dbReference>
<dbReference type="GO" id="GO:0007186">
    <property type="term" value="P:G protein-coupled receptor signaling pathway"/>
    <property type="evidence" value="ECO:0000304"/>
    <property type="project" value="ProtInc"/>
</dbReference>
<dbReference type="GO" id="GO:0006955">
    <property type="term" value="P:immune response"/>
    <property type="evidence" value="ECO:0000318"/>
    <property type="project" value="GO_Central"/>
</dbReference>
<dbReference type="GO" id="GO:0030595">
    <property type="term" value="P:leukocyte chemotaxis"/>
    <property type="evidence" value="ECO:0007669"/>
    <property type="project" value="Ensembl"/>
</dbReference>
<dbReference type="GO" id="GO:0048535">
    <property type="term" value="P:lymph node development"/>
    <property type="evidence" value="ECO:0007669"/>
    <property type="project" value="Ensembl"/>
</dbReference>
<dbReference type="GO" id="GO:0032467">
    <property type="term" value="P:positive regulation of cytokinesis"/>
    <property type="evidence" value="ECO:0000315"/>
    <property type="project" value="UniProtKB"/>
</dbReference>
<dbReference type="GO" id="GO:0007204">
    <property type="term" value="P:positive regulation of cytosolic calcium ion concentration"/>
    <property type="evidence" value="ECO:0000318"/>
    <property type="project" value="GO_Central"/>
</dbReference>
<dbReference type="CDD" id="cd15181">
    <property type="entry name" value="7tmA_CXCR5"/>
    <property type="match status" value="1"/>
</dbReference>
<dbReference type="FunFam" id="1.20.1070.10:FF:000143">
    <property type="entry name" value="C-X-C chemokine receptor type 5"/>
    <property type="match status" value="1"/>
</dbReference>
<dbReference type="Gene3D" id="1.20.1070.10">
    <property type="entry name" value="Rhodopsin 7-helix transmembrane proteins"/>
    <property type="match status" value="1"/>
</dbReference>
<dbReference type="InterPro" id="IPR050119">
    <property type="entry name" value="CCR1-9-like"/>
</dbReference>
<dbReference type="InterPro" id="IPR001053">
    <property type="entry name" value="Chemokine_CXCR5"/>
</dbReference>
<dbReference type="InterPro" id="IPR000276">
    <property type="entry name" value="GPCR_Rhodpsn"/>
</dbReference>
<dbReference type="InterPro" id="IPR017452">
    <property type="entry name" value="GPCR_Rhodpsn_7TM"/>
</dbReference>
<dbReference type="PANTHER" id="PTHR10489:SF618">
    <property type="entry name" value="C-X-C CHEMOKINE RECEPTOR TYPE 5"/>
    <property type="match status" value="1"/>
</dbReference>
<dbReference type="PANTHER" id="PTHR10489">
    <property type="entry name" value="CELL ADHESION MOLECULE"/>
    <property type="match status" value="1"/>
</dbReference>
<dbReference type="Pfam" id="PF00001">
    <property type="entry name" value="7tm_1"/>
    <property type="match status" value="1"/>
</dbReference>
<dbReference type="PRINTS" id="PR00564">
    <property type="entry name" value="CXCCHMKINER5"/>
</dbReference>
<dbReference type="PRINTS" id="PR00237">
    <property type="entry name" value="GPCRRHODOPSN"/>
</dbReference>
<dbReference type="SUPFAM" id="SSF81321">
    <property type="entry name" value="Family A G protein-coupled receptor-like"/>
    <property type="match status" value="1"/>
</dbReference>
<dbReference type="PROSITE" id="PS00237">
    <property type="entry name" value="G_PROTEIN_RECEP_F1_1"/>
    <property type="match status" value="1"/>
</dbReference>
<dbReference type="PROSITE" id="PS50262">
    <property type="entry name" value="G_PROTEIN_RECEP_F1_2"/>
    <property type="match status" value="1"/>
</dbReference>
<accession>P32302</accession>
<accession>Q14811</accession>
<feature type="chain" id="PRO_0000069360" description="C-X-C chemokine receptor type 5">
    <location>
        <begin position="1"/>
        <end position="372"/>
    </location>
</feature>
<feature type="topological domain" description="Extracellular" evidence="1">
    <location>
        <begin position="1"/>
        <end position="55"/>
    </location>
</feature>
<feature type="transmembrane region" description="Helical; Name=1" evidence="1">
    <location>
        <begin position="56"/>
        <end position="76"/>
    </location>
</feature>
<feature type="topological domain" description="Cytoplasmic" evidence="1">
    <location>
        <begin position="77"/>
        <end position="88"/>
    </location>
</feature>
<feature type="transmembrane region" description="Helical; Name=2" evidence="1">
    <location>
        <begin position="89"/>
        <end position="109"/>
    </location>
</feature>
<feature type="topological domain" description="Extracellular" evidence="1">
    <location>
        <begin position="110"/>
        <end position="124"/>
    </location>
</feature>
<feature type="transmembrane region" description="Helical; Name=3" evidence="1">
    <location>
        <begin position="125"/>
        <end position="145"/>
    </location>
</feature>
<feature type="topological domain" description="Cytoplasmic" evidence="1">
    <location>
        <begin position="146"/>
        <end position="167"/>
    </location>
</feature>
<feature type="transmembrane region" description="Helical; Name=4" evidence="1">
    <location>
        <begin position="168"/>
        <end position="188"/>
    </location>
</feature>
<feature type="topological domain" description="Extracellular" evidence="1">
    <location>
        <begin position="189"/>
        <end position="219"/>
    </location>
</feature>
<feature type="transmembrane region" description="Helical; Name=5" evidence="1">
    <location>
        <begin position="220"/>
        <end position="240"/>
    </location>
</feature>
<feature type="topological domain" description="Cytoplasmic" evidence="1">
    <location>
        <begin position="241"/>
        <end position="259"/>
    </location>
</feature>
<feature type="transmembrane region" description="Helical; Name=6" evidence="1">
    <location>
        <begin position="260"/>
        <end position="280"/>
    </location>
</feature>
<feature type="topological domain" description="Extracellular" evidence="1">
    <location>
        <begin position="281"/>
        <end position="304"/>
    </location>
</feature>
<feature type="transmembrane region" description="Helical; Name=7" evidence="1">
    <location>
        <begin position="305"/>
        <end position="325"/>
    </location>
</feature>
<feature type="topological domain" description="Cytoplasmic" evidence="1">
    <location>
        <begin position="326"/>
        <end position="372"/>
    </location>
</feature>
<feature type="glycosylation site" description="N-linked (GlcNAc...) asparagine" evidence="1">
    <location>
        <position position="28"/>
    </location>
</feature>
<feature type="glycosylation site" description="N-linked (GlcNAc...) asparagine" evidence="1">
    <location>
        <position position="196"/>
    </location>
</feature>
<feature type="disulfide bond" evidence="2">
    <location>
        <begin position="122"/>
        <end position="202"/>
    </location>
</feature>
<feature type="splice variant" id="VSP_001892" description="In isoform Short." evidence="4">
    <location>
        <begin position="1"/>
        <end position="45"/>
    </location>
</feature>
<feature type="sequence variant" id="VAR_035757" description="In a breast cancer sample; somatic mutation." evidence="3">
    <original>E</original>
    <variation>K</variation>
    <location>
        <position position="34"/>
    </location>
</feature>
<feature type="sequence variant" id="VAR_011838" description="In dbSNP:rs665648.">
    <original>G</original>
    <variation>S</variation>
    <location>
        <position position="344"/>
    </location>
</feature>
<reference key="1">
    <citation type="journal article" date="1992" name="Eur. J. Immunol.">
        <title>Differentiation-specific expression of a novel G protein-coupled receptor from Burkitt's lymphoma.</title>
        <authorList>
            <person name="Dobner T."/>
            <person name="Wolf I."/>
            <person name="Emrich T."/>
            <person name="Lipp M."/>
        </authorList>
    </citation>
    <scope>NUCLEOTIDE SEQUENCE [MRNA] (ISOFORM LONG)</scope>
    <source>
        <tissue>Lymphocyte</tissue>
    </source>
</reference>
<reference key="2">
    <citation type="journal article" date="1995" name="Biochem. J.">
        <title>Sequence variation of a novel heptahelical leucocyte receptor through alternative transcript formation.</title>
        <authorList>
            <person name="Barella L."/>
            <person name="Loetscher M."/>
            <person name="Tobler A."/>
            <person name="Baggiolini M."/>
            <person name="Moser B."/>
        </authorList>
    </citation>
    <scope>NUCLEOTIDE SEQUENCE [MRNA] (ISOFORM SHORT)</scope>
    <source>
        <tissue>Blood</tissue>
    </source>
</reference>
<reference key="3">
    <citation type="journal article" date="1998" name="J. Exp. Med.">
        <title>B cell-attracting chemokine 1, a human CXC chemokine expressed in lymphoid tissues, selectively attracts B lymphocytes via BLR1/CXCR5.</title>
        <authorList>
            <person name="Legler D.F."/>
            <person name="Loetscher M."/>
            <person name="Stuber Roos R."/>
            <person name="Clark-Lewis I."/>
            <person name="Baggiolini M."/>
            <person name="Moser B."/>
        </authorList>
    </citation>
    <scope>LIGAND-BINDING</scope>
</reference>
<reference key="4">
    <citation type="journal article" date="2006" name="Science">
        <title>The consensus coding sequences of human breast and colorectal cancers.</title>
        <authorList>
            <person name="Sjoeblom T."/>
            <person name="Jones S."/>
            <person name="Wood L.D."/>
            <person name="Parsons D.W."/>
            <person name="Lin J."/>
            <person name="Barber T.D."/>
            <person name="Mandelker D."/>
            <person name="Leary R.J."/>
            <person name="Ptak J."/>
            <person name="Silliman N."/>
            <person name="Szabo S."/>
            <person name="Buckhaults P."/>
            <person name="Farrell C."/>
            <person name="Meeh P."/>
            <person name="Markowitz S.D."/>
            <person name="Willis J."/>
            <person name="Dawson D."/>
            <person name="Willson J.K.V."/>
            <person name="Gazdar A.F."/>
            <person name="Hartigan J."/>
            <person name="Wu L."/>
            <person name="Liu C."/>
            <person name="Parmigiani G."/>
            <person name="Park B.H."/>
            <person name="Bachman K.E."/>
            <person name="Papadopoulos N."/>
            <person name="Vogelstein B."/>
            <person name="Kinzler K.W."/>
            <person name="Velculescu V.E."/>
        </authorList>
    </citation>
    <scope>VARIANT [LARGE SCALE ANALYSIS] LYS-34</scope>
</reference>
<comment type="function">
    <text>Cytokine receptor that binds to B-lymphocyte chemoattractant (BLC). Involved in B-cell migration into B-cell follicles of spleen and Peyer patches but not into those of mesenteric or peripheral lymph nodes. May have a regulatory function in Burkitt lymphoma (BL) lymphomagenesis and/or B-cell differentiation.</text>
</comment>
<comment type="interaction">
    <interactant intactId="EBI-2835269">
        <id>P32302</id>
    </interactant>
    <interactant intactId="EBI-489411">
        <id>P61073</id>
        <label>CXCR4</label>
    </interactant>
    <organismsDiffer>false</organismsDiffer>
    <experiments>3</experiments>
</comment>
<comment type="interaction">
    <interactant intactId="EBI-2835269">
        <id>P32302</id>
    </interactant>
    <interactant intactId="EBI-465387">
        <id>Q14344</id>
        <label>GNA13</label>
    </interactant>
    <organismsDiffer>false</organismsDiffer>
    <experiments>9</experiments>
</comment>
<comment type="interaction">
    <interactant intactId="EBI-2835269">
        <id>P32302</id>
    </interactant>
    <interactant intactId="EBI-353997">
        <id>P04899</id>
        <label>GNAI2</label>
    </interactant>
    <organismsDiffer>false</organismsDiffer>
    <experiments>5</experiments>
</comment>
<comment type="interaction">
    <interactant intactId="EBI-2835269">
        <id>P32302</id>
    </interactant>
    <interactant intactId="EBI-2880663">
        <id>P16520</id>
        <label>GNB3</label>
    </interactant>
    <organismsDiffer>false</organismsDiffer>
    <experiments>3</experiments>
</comment>
<comment type="interaction">
    <interactant intactId="EBI-2835269">
        <id>P32302</id>
    </interactant>
    <interactant intactId="EBI-9074207">
        <id>Q9UK08</id>
        <label>GNG8</label>
    </interactant>
    <organismsDiffer>false</organismsDiffer>
    <experiments>3</experiments>
</comment>
<comment type="subcellular location">
    <subcellularLocation>
        <location>Cell membrane</location>
        <topology>Multi-pass membrane protein</topology>
    </subcellularLocation>
</comment>
<comment type="alternative products">
    <event type="alternative splicing"/>
    <isoform>
        <id>P32302-1</id>
        <name>Long</name>
        <sequence type="displayed"/>
    </isoform>
    <isoform>
        <id>P32302-2</id>
        <name>Short</name>
        <sequence type="described" ref="VSP_001892"/>
    </isoform>
</comment>
<comment type="tissue specificity">
    <text>Expression in mature B-cells and Burkitt lymphoma cells.</text>
</comment>
<comment type="similarity">
    <text evidence="2">Belongs to the G-protein coupled receptor 1 family.</text>
</comment>
<comment type="online information" name="Wikipedia">
    <link uri="https://en.wikipedia.org/wiki/CXC_chemokine_receptors"/>
    <text>CXC chemokine receptors entry</text>
</comment>
<gene>
    <name type="primary">CXCR5</name>
    <name type="synonym">BLR1</name>
    <name type="synonym">MDR15</name>
</gene>
<proteinExistence type="evidence at protein level"/>
<name>CXCR5_HUMAN</name>